<feature type="chain" id="PRO_1000057538" description="Acetylglutamate kinase">
    <location>
        <begin position="1"/>
        <end position="258"/>
    </location>
</feature>
<feature type="binding site" evidence="1">
    <location>
        <begin position="41"/>
        <end position="42"/>
    </location>
    <ligand>
        <name>substrate</name>
    </ligand>
</feature>
<feature type="binding site" evidence="1">
    <location>
        <position position="63"/>
    </location>
    <ligand>
        <name>substrate</name>
    </ligand>
</feature>
<feature type="binding site" evidence="1">
    <location>
        <position position="156"/>
    </location>
    <ligand>
        <name>substrate</name>
    </ligand>
</feature>
<feature type="site" description="Transition state stabilizer" evidence="1">
    <location>
        <position position="8"/>
    </location>
</feature>
<feature type="site" description="Transition state stabilizer" evidence="1">
    <location>
        <position position="215"/>
    </location>
</feature>
<proteinExistence type="inferred from homology"/>
<protein>
    <recommendedName>
        <fullName evidence="1">Acetylglutamate kinase</fullName>
        <ecNumber evidence="1">2.7.2.8</ecNumber>
    </recommendedName>
    <alternativeName>
        <fullName evidence="1">N-acetyl-L-glutamate 5-phosphotransferase</fullName>
    </alternativeName>
    <alternativeName>
        <fullName evidence="1">NAG kinase</fullName>
        <shortName evidence="1">NAGK</shortName>
    </alternativeName>
</protein>
<reference key="1">
    <citation type="journal article" date="2007" name="PLoS ONE">
        <title>Paradoxical DNA repair and peroxide resistance gene conservation in Bacillus pumilus SAFR-032.</title>
        <authorList>
            <person name="Gioia J."/>
            <person name="Yerrapragada S."/>
            <person name="Qin X."/>
            <person name="Jiang H."/>
            <person name="Igboeli O.C."/>
            <person name="Muzny D."/>
            <person name="Dugan-Rocha S."/>
            <person name="Ding Y."/>
            <person name="Hawes A."/>
            <person name="Liu W."/>
            <person name="Perez L."/>
            <person name="Kovar C."/>
            <person name="Dinh H."/>
            <person name="Lee S."/>
            <person name="Nazareth L."/>
            <person name="Blyth P."/>
            <person name="Holder M."/>
            <person name="Buhay C."/>
            <person name="Tirumalai M.R."/>
            <person name="Liu Y."/>
            <person name="Dasgupta I."/>
            <person name="Bokhetache L."/>
            <person name="Fujita M."/>
            <person name="Karouia F."/>
            <person name="Eswara Moorthy P."/>
            <person name="Siefert J."/>
            <person name="Uzman A."/>
            <person name="Buzumbo P."/>
            <person name="Verma A."/>
            <person name="Zwiya H."/>
            <person name="McWilliams B.D."/>
            <person name="Olowu A."/>
            <person name="Clinkenbeard K.D."/>
            <person name="Newcombe D."/>
            <person name="Golebiewski L."/>
            <person name="Petrosino J.F."/>
            <person name="Nicholson W.L."/>
            <person name="Fox G.E."/>
            <person name="Venkateswaran K."/>
            <person name="Highlander S.K."/>
            <person name="Weinstock G.M."/>
        </authorList>
    </citation>
    <scope>NUCLEOTIDE SEQUENCE [LARGE SCALE GENOMIC DNA]</scope>
    <source>
        <strain>SAFR-032</strain>
    </source>
</reference>
<dbReference type="EC" id="2.7.2.8" evidence="1"/>
<dbReference type="EMBL" id="CP000813">
    <property type="protein sequence ID" value="ABV61728.1"/>
    <property type="molecule type" value="Genomic_DNA"/>
</dbReference>
<dbReference type="RefSeq" id="WP_012009542.1">
    <property type="nucleotide sequence ID" value="NZ_VEIS01000013.1"/>
</dbReference>
<dbReference type="SMR" id="A8FBW1"/>
<dbReference type="STRING" id="315750.BPUM_1044"/>
<dbReference type="GeneID" id="5620308"/>
<dbReference type="KEGG" id="bpu:BPUM_1044"/>
<dbReference type="eggNOG" id="COG0548">
    <property type="taxonomic scope" value="Bacteria"/>
</dbReference>
<dbReference type="HOGENOM" id="CLU_053680_0_0_9"/>
<dbReference type="OrthoDB" id="9803155at2"/>
<dbReference type="UniPathway" id="UPA00068">
    <property type="reaction ID" value="UER00107"/>
</dbReference>
<dbReference type="Proteomes" id="UP000001355">
    <property type="component" value="Chromosome"/>
</dbReference>
<dbReference type="GO" id="GO:0005737">
    <property type="term" value="C:cytoplasm"/>
    <property type="evidence" value="ECO:0007669"/>
    <property type="project" value="UniProtKB-SubCell"/>
</dbReference>
<dbReference type="GO" id="GO:0003991">
    <property type="term" value="F:acetylglutamate kinase activity"/>
    <property type="evidence" value="ECO:0007669"/>
    <property type="project" value="UniProtKB-UniRule"/>
</dbReference>
<dbReference type="GO" id="GO:0005524">
    <property type="term" value="F:ATP binding"/>
    <property type="evidence" value="ECO:0007669"/>
    <property type="project" value="UniProtKB-UniRule"/>
</dbReference>
<dbReference type="GO" id="GO:0042450">
    <property type="term" value="P:arginine biosynthetic process via ornithine"/>
    <property type="evidence" value="ECO:0007669"/>
    <property type="project" value="UniProtKB-UniRule"/>
</dbReference>
<dbReference type="GO" id="GO:0006526">
    <property type="term" value="P:L-arginine biosynthetic process"/>
    <property type="evidence" value="ECO:0007669"/>
    <property type="project" value="UniProtKB-UniPathway"/>
</dbReference>
<dbReference type="CDD" id="cd04238">
    <property type="entry name" value="AAK_NAGK-like"/>
    <property type="match status" value="1"/>
</dbReference>
<dbReference type="FunFam" id="3.40.1160.10:FF:000004">
    <property type="entry name" value="Acetylglutamate kinase"/>
    <property type="match status" value="1"/>
</dbReference>
<dbReference type="Gene3D" id="3.40.1160.10">
    <property type="entry name" value="Acetylglutamate kinase-like"/>
    <property type="match status" value="1"/>
</dbReference>
<dbReference type="HAMAP" id="MF_00082">
    <property type="entry name" value="ArgB"/>
    <property type="match status" value="1"/>
</dbReference>
<dbReference type="InterPro" id="IPR036393">
    <property type="entry name" value="AceGlu_kinase-like_sf"/>
</dbReference>
<dbReference type="InterPro" id="IPR004662">
    <property type="entry name" value="AcgluKinase_fam"/>
</dbReference>
<dbReference type="InterPro" id="IPR037528">
    <property type="entry name" value="ArgB"/>
</dbReference>
<dbReference type="InterPro" id="IPR001048">
    <property type="entry name" value="Asp/Glu/Uridylate_kinase"/>
</dbReference>
<dbReference type="NCBIfam" id="TIGR00761">
    <property type="entry name" value="argB"/>
    <property type="match status" value="1"/>
</dbReference>
<dbReference type="PANTHER" id="PTHR23342">
    <property type="entry name" value="N-ACETYLGLUTAMATE SYNTHASE"/>
    <property type="match status" value="1"/>
</dbReference>
<dbReference type="PANTHER" id="PTHR23342:SF0">
    <property type="entry name" value="N-ACETYLGLUTAMATE SYNTHASE, MITOCHONDRIAL"/>
    <property type="match status" value="1"/>
</dbReference>
<dbReference type="Pfam" id="PF00696">
    <property type="entry name" value="AA_kinase"/>
    <property type="match status" value="1"/>
</dbReference>
<dbReference type="PIRSF" id="PIRSF000728">
    <property type="entry name" value="NAGK"/>
    <property type="match status" value="1"/>
</dbReference>
<dbReference type="SUPFAM" id="SSF53633">
    <property type="entry name" value="Carbamate kinase-like"/>
    <property type="match status" value="1"/>
</dbReference>
<name>ARGB_BACP2</name>
<sequence length="258" mass="27738">MDKTIVFKCGGSVIRELSDTFYENVRSLQAAGFKLAIVHGGGPEITNMLQKLDVKTEFVDGQRKTTKPVLEVAEMVLSGTVNKYFVSELAKHDISSVGVSGKDGQMLVADFLDQDVYGYVGEIKEVHPEMAEALMEKQFIPVIAPLSMTEECQTLNVNADLAASAVAGAMKADKLMFVTDVEGILKNGELLDVVTEQEALTLIDEGIISGGMIPKVQSALSALSGDVDEVMIVNGKGSIFTGETFKGTRIVKEKEAVL</sequence>
<evidence type="ECO:0000255" key="1">
    <source>
        <dbReference type="HAMAP-Rule" id="MF_00082"/>
    </source>
</evidence>
<accession>A8FBW1</accession>
<organism>
    <name type="scientific">Bacillus pumilus (strain SAFR-032)</name>
    <dbReference type="NCBI Taxonomy" id="315750"/>
    <lineage>
        <taxon>Bacteria</taxon>
        <taxon>Bacillati</taxon>
        <taxon>Bacillota</taxon>
        <taxon>Bacilli</taxon>
        <taxon>Bacillales</taxon>
        <taxon>Bacillaceae</taxon>
        <taxon>Bacillus</taxon>
    </lineage>
</organism>
<keyword id="KW-0028">Amino-acid biosynthesis</keyword>
<keyword id="KW-0055">Arginine biosynthesis</keyword>
<keyword id="KW-0067">ATP-binding</keyword>
<keyword id="KW-0963">Cytoplasm</keyword>
<keyword id="KW-0418">Kinase</keyword>
<keyword id="KW-0547">Nucleotide-binding</keyword>
<keyword id="KW-0808">Transferase</keyword>
<gene>
    <name evidence="1" type="primary">argB</name>
    <name type="ordered locus">BPUM_1044</name>
</gene>
<comment type="function">
    <text evidence="1">Catalyzes the ATP-dependent phosphorylation of N-acetyl-L-glutamate.</text>
</comment>
<comment type="catalytic activity">
    <reaction evidence="1">
        <text>N-acetyl-L-glutamate + ATP = N-acetyl-L-glutamyl 5-phosphate + ADP</text>
        <dbReference type="Rhea" id="RHEA:14629"/>
        <dbReference type="ChEBI" id="CHEBI:30616"/>
        <dbReference type="ChEBI" id="CHEBI:44337"/>
        <dbReference type="ChEBI" id="CHEBI:57936"/>
        <dbReference type="ChEBI" id="CHEBI:456216"/>
        <dbReference type="EC" id="2.7.2.8"/>
    </reaction>
</comment>
<comment type="pathway">
    <text evidence="1">Amino-acid biosynthesis; L-arginine biosynthesis; N(2)-acetyl-L-ornithine from L-glutamate: step 2/4.</text>
</comment>
<comment type="subcellular location">
    <subcellularLocation>
        <location evidence="1">Cytoplasm</location>
    </subcellularLocation>
</comment>
<comment type="similarity">
    <text evidence="1">Belongs to the acetylglutamate kinase family. ArgB subfamily.</text>
</comment>